<feature type="chain" id="PRO_0000378219" description="Putative cysteine ligase BshC">
    <location>
        <begin position="1"/>
        <end position="538"/>
    </location>
</feature>
<feature type="coiled-coil region" evidence="1">
    <location>
        <begin position="454"/>
        <end position="482"/>
    </location>
</feature>
<gene>
    <name evidence="1" type="primary">bshC</name>
    <name type="ordered locus">BLi01729</name>
    <name type="ordered locus">BL00850</name>
</gene>
<proteinExistence type="inferred from homology"/>
<sequence length="538" mass="62300">MQLTELSIQSQNPFVRDYINGKKEIEPFFDYGLSNESWSVRLDDLSSRTYDRDALADYLLDYHRKFQSATMNETIERLRDPKSVVVVGGQQAGLLTGPLYTIHKIVSILLLAKQKEQELNVPVIPVFWVAGEDHDLEEINHVYISDGGKVKKHKLPQSHWKKSQAAKTALDAEKAEKWLDGIFASFEETEYTNDLLGHLRRCLRQSLSFTDFFEFLVADMFEQDGLILLNSGDPGIRNLEARFFRQLLDKNDELTDSVKRQQELMKQLGYTPIIEGAAQHANIFYERDGERFLIEKENGAFFIKELHLQWSEAELCDLICQNPEAFSNNVVTRPLMQEYLLPTLAFIAGPGEINYWGELKGAFQVMGYKMPPVVPRLQVTFLERHIEKKLDERGIELRESIEKGARAKKEQYFQDKVPSGFTDSVKQAKEKIENIHSAVRAEALEIDGSLGPLLEKNAGFIQDQLQFLEKTVIRRIEEKENYILRDFDKIQTSIKPLDAPQERIWNIVYYLNKYGPDFLEKYKDLPYSFQNMHQVVKL</sequence>
<accession>Q65JZ0</accession>
<accession>Q62VE1</accession>
<protein>
    <recommendedName>
        <fullName evidence="1">Putative cysteine ligase BshC</fullName>
        <ecNumber evidence="1">6.-.-.-</ecNumber>
    </recommendedName>
</protein>
<comment type="function">
    <text evidence="1">Involved in bacillithiol (BSH) biosynthesis. May catalyze the last step of the pathway, the addition of cysteine to glucosamine malate (GlcN-Mal) to generate BSH.</text>
</comment>
<comment type="similarity">
    <text evidence="1">Belongs to the BshC family.</text>
</comment>
<keyword id="KW-0175">Coiled coil</keyword>
<keyword id="KW-0436">Ligase</keyword>
<keyword id="KW-1185">Reference proteome</keyword>
<dbReference type="EC" id="6.-.-.-" evidence="1"/>
<dbReference type="EMBL" id="CP000002">
    <property type="protein sequence ID" value="AAU23267.2"/>
    <property type="molecule type" value="Genomic_DNA"/>
</dbReference>
<dbReference type="EMBL" id="AE017333">
    <property type="protein sequence ID" value="AAU40624.1"/>
    <property type="molecule type" value="Genomic_DNA"/>
</dbReference>
<dbReference type="RefSeq" id="WP_011197956.1">
    <property type="nucleotide sequence ID" value="NC_006322.1"/>
</dbReference>
<dbReference type="SMR" id="Q65JZ0"/>
<dbReference type="STRING" id="279010.BL00850"/>
<dbReference type="GeneID" id="92861677"/>
<dbReference type="KEGG" id="bld:BLi01729"/>
<dbReference type="KEGG" id="bli:BL00850"/>
<dbReference type="PATRIC" id="fig|279010.13.peg.1728"/>
<dbReference type="eggNOG" id="COG4365">
    <property type="taxonomic scope" value="Bacteria"/>
</dbReference>
<dbReference type="HOGENOM" id="CLU_022249_1_0_9"/>
<dbReference type="Proteomes" id="UP000000606">
    <property type="component" value="Chromosome"/>
</dbReference>
<dbReference type="GO" id="GO:0016874">
    <property type="term" value="F:ligase activity"/>
    <property type="evidence" value="ECO:0007669"/>
    <property type="project" value="UniProtKB-UniRule"/>
</dbReference>
<dbReference type="HAMAP" id="MF_01867">
    <property type="entry name" value="BshC"/>
    <property type="match status" value="1"/>
</dbReference>
<dbReference type="InterPro" id="IPR011199">
    <property type="entry name" value="Bacillithiol_biosynth_BshC"/>
</dbReference>
<dbReference type="InterPro" id="IPR055399">
    <property type="entry name" value="CC_BshC"/>
</dbReference>
<dbReference type="InterPro" id="IPR055398">
    <property type="entry name" value="Rossmann-like_BshC"/>
</dbReference>
<dbReference type="NCBIfam" id="TIGR03998">
    <property type="entry name" value="thiol_BshC"/>
    <property type="match status" value="1"/>
</dbReference>
<dbReference type="Pfam" id="PF24850">
    <property type="entry name" value="CC_BshC"/>
    <property type="match status" value="1"/>
</dbReference>
<dbReference type="Pfam" id="PF10079">
    <property type="entry name" value="Rossmann-like_BshC"/>
    <property type="match status" value="1"/>
</dbReference>
<dbReference type="PIRSF" id="PIRSF012535">
    <property type="entry name" value="UCP012535"/>
    <property type="match status" value="1"/>
</dbReference>
<organism>
    <name type="scientific">Bacillus licheniformis (strain ATCC 14580 / DSM 13 / JCM 2505 / CCUG 7422 / NBRC 12200 / NCIMB 9375 / NCTC 10341 / NRRL NRS-1264 / Gibson 46)</name>
    <dbReference type="NCBI Taxonomy" id="279010"/>
    <lineage>
        <taxon>Bacteria</taxon>
        <taxon>Bacillati</taxon>
        <taxon>Bacillota</taxon>
        <taxon>Bacilli</taxon>
        <taxon>Bacillales</taxon>
        <taxon>Bacillaceae</taxon>
        <taxon>Bacillus</taxon>
    </lineage>
</organism>
<reference key="1">
    <citation type="journal article" date="2004" name="J. Mol. Microbiol. Biotechnol.">
        <title>The complete genome sequence of Bacillus licheniformis DSM13, an organism with great industrial potential.</title>
        <authorList>
            <person name="Veith B."/>
            <person name="Herzberg C."/>
            <person name="Steckel S."/>
            <person name="Feesche J."/>
            <person name="Maurer K.H."/>
            <person name="Ehrenreich P."/>
            <person name="Baeumer S."/>
            <person name="Henne A."/>
            <person name="Liesegang H."/>
            <person name="Merkl R."/>
            <person name="Ehrenreich A."/>
            <person name="Gottschalk G."/>
        </authorList>
    </citation>
    <scope>NUCLEOTIDE SEQUENCE [LARGE SCALE GENOMIC DNA]</scope>
    <source>
        <strain>ATCC 14580 / DSM 13 / JCM 2505 / CCUG 7422 / NBRC 12200 / NCIMB 9375 / NCTC 10341 / NRRL NRS-1264 / Gibson 46</strain>
    </source>
</reference>
<reference key="2">
    <citation type="journal article" date="2004" name="Genome Biol.">
        <title>Complete genome sequence of the industrial bacterium Bacillus licheniformis and comparisons with closely related Bacillus species.</title>
        <authorList>
            <person name="Rey M.W."/>
            <person name="Ramaiya P."/>
            <person name="Nelson B.A."/>
            <person name="Brody-Karpin S.D."/>
            <person name="Zaretsky E.J."/>
            <person name="Tang M."/>
            <person name="Lopez de Leon A."/>
            <person name="Xiang H."/>
            <person name="Gusti V."/>
            <person name="Clausen I.G."/>
            <person name="Olsen P.B."/>
            <person name="Rasmussen M.D."/>
            <person name="Andersen J.T."/>
            <person name="Joergensen P.L."/>
            <person name="Larsen T.S."/>
            <person name="Sorokin A."/>
            <person name="Bolotin A."/>
            <person name="Lapidus A."/>
            <person name="Galleron N."/>
            <person name="Ehrlich S.D."/>
            <person name="Berka R.M."/>
        </authorList>
    </citation>
    <scope>NUCLEOTIDE SEQUENCE [LARGE SCALE GENOMIC DNA]</scope>
    <source>
        <strain>ATCC 14580 / DSM 13 / JCM 2505 / CCUG 7422 / NBRC 12200 / NCIMB 9375 / NCTC 10341 / NRRL NRS-1264 / Gibson 46</strain>
    </source>
</reference>
<evidence type="ECO:0000255" key="1">
    <source>
        <dbReference type="HAMAP-Rule" id="MF_01867"/>
    </source>
</evidence>
<name>BSHC_BACLD</name>